<evidence type="ECO:0000255" key="1">
    <source>
        <dbReference type="HAMAP-Rule" id="MF_01633"/>
    </source>
</evidence>
<reference key="1">
    <citation type="submission" date="2009-03" db="EMBL/GenBank/DDBJ databases">
        <title>Complete genome sequence of Edwardsiella ictaluri 93-146.</title>
        <authorList>
            <person name="Williams M.L."/>
            <person name="Gillaspy A.F."/>
            <person name="Dyer D.W."/>
            <person name="Thune R.L."/>
            <person name="Waldbieser G.C."/>
            <person name="Schuster S.C."/>
            <person name="Gipson J."/>
            <person name="Zaitshik J."/>
            <person name="Landry C."/>
            <person name="Lawrence M.L."/>
        </authorList>
    </citation>
    <scope>NUCLEOTIDE SEQUENCE [LARGE SCALE GENOMIC DNA]</scope>
    <source>
        <strain>93-146</strain>
    </source>
</reference>
<dbReference type="EC" id="6.3.4.20" evidence="1"/>
<dbReference type="EMBL" id="CP001600">
    <property type="protein sequence ID" value="ACR68297.1"/>
    <property type="molecule type" value="Genomic_DNA"/>
</dbReference>
<dbReference type="RefSeq" id="WP_015870477.1">
    <property type="nucleotide sequence ID" value="NZ_CP169062.1"/>
</dbReference>
<dbReference type="SMR" id="C5BCK3"/>
<dbReference type="STRING" id="67780.B6E78_15790"/>
<dbReference type="GeneID" id="69538118"/>
<dbReference type="KEGG" id="eic:NT01EI_1085"/>
<dbReference type="PATRIC" id="fig|634503.3.peg.984"/>
<dbReference type="HOGENOM" id="CLU_081854_0_0_6"/>
<dbReference type="OrthoDB" id="9789567at2"/>
<dbReference type="UniPathway" id="UPA00391"/>
<dbReference type="Proteomes" id="UP000001485">
    <property type="component" value="Chromosome"/>
</dbReference>
<dbReference type="GO" id="GO:0005524">
    <property type="term" value="F:ATP binding"/>
    <property type="evidence" value="ECO:0007669"/>
    <property type="project" value="UniProtKB-UniRule"/>
</dbReference>
<dbReference type="GO" id="GO:0016879">
    <property type="term" value="F:ligase activity, forming carbon-nitrogen bonds"/>
    <property type="evidence" value="ECO:0007669"/>
    <property type="project" value="UniProtKB-UniRule"/>
</dbReference>
<dbReference type="GO" id="GO:0008270">
    <property type="term" value="F:zinc ion binding"/>
    <property type="evidence" value="ECO:0007669"/>
    <property type="project" value="UniProtKB-UniRule"/>
</dbReference>
<dbReference type="GO" id="GO:0008616">
    <property type="term" value="P:queuosine biosynthetic process"/>
    <property type="evidence" value="ECO:0007669"/>
    <property type="project" value="UniProtKB-UniRule"/>
</dbReference>
<dbReference type="CDD" id="cd01995">
    <property type="entry name" value="QueC-like"/>
    <property type="match status" value="1"/>
</dbReference>
<dbReference type="FunFam" id="3.40.50.620:FF:000017">
    <property type="entry name" value="7-cyano-7-deazaguanine synthase"/>
    <property type="match status" value="1"/>
</dbReference>
<dbReference type="Gene3D" id="3.40.50.620">
    <property type="entry name" value="HUPs"/>
    <property type="match status" value="1"/>
</dbReference>
<dbReference type="HAMAP" id="MF_01633">
    <property type="entry name" value="QueC"/>
    <property type="match status" value="1"/>
</dbReference>
<dbReference type="InterPro" id="IPR018317">
    <property type="entry name" value="QueC"/>
</dbReference>
<dbReference type="InterPro" id="IPR014729">
    <property type="entry name" value="Rossmann-like_a/b/a_fold"/>
</dbReference>
<dbReference type="NCBIfam" id="TIGR00364">
    <property type="entry name" value="7-cyano-7-deazaguanine synthase QueC"/>
    <property type="match status" value="1"/>
</dbReference>
<dbReference type="NCBIfam" id="NF008317">
    <property type="entry name" value="PRK11106.1"/>
    <property type="match status" value="1"/>
</dbReference>
<dbReference type="PANTHER" id="PTHR42914">
    <property type="entry name" value="7-CYANO-7-DEAZAGUANINE SYNTHASE"/>
    <property type="match status" value="1"/>
</dbReference>
<dbReference type="PANTHER" id="PTHR42914:SF1">
    <property type="entry name" value="7-CYANO-7-DEAZAGUANINE SYNTHASE"/>
    <property type="match status" value="1"/>
</dbReference>
<dbReference type="Pfam" id="PF06508">
    <property type="entry name" value="QueC"/>
    <property type="match status" value="1"/>
</dbReference>
<dbReference type="PIRSF" id="PIRSF006293">
    <property type="entry name" value="ExsB"/>
    <property type="match status" value="1"/>
</dbReference>
<dbReference type="SUPFAM" id="SSF52402">
    <property type="entry name" value="Adenine nucleotide alpha hydrolases-like"/>
    <property type="match status" value="1"/>
</dbReference>
<keyword id="KW-0067">ATP-binding</keyword>
<keyword id="KW-0436">Ligase</keyword>
<keyword id="KW-0479">Metal-binding</keyword>
<keyword id="KW-0547">Nucleotide-binding</keyword>
<keyword id="KW-0671">Queuosine biosynthesis</keyword>
<keyword id="KW-0862">Zinc</keyword>
<accession>C5BCK3</accession>
<proteinExistence type="inferred from homology"/>
<name>QUEC_EDWI9</name>
<comment type="function">
    <text evidence="1">Catalyzes the ATP-dependent conversion of 7-carboxy-7-deazaguanine (CDG) to 7-cyano-7-deazaguanine (preQ(0)).</text>
</comment>
<comment type="catalytic activity">
    <reaction evidence="1">
        <text>7-carboxy-7-deazaguanine + NH4(+) + ATP = 7-cyano-7-deazaguanine + ADP + phosphate + H2O + H(+)</text>
        <dbReference type="Rhea" id="RHEA:27982"/>
        <dbReference type="ChEBI" id="CHEBI:15377"/>
        <dbReference type="ChEBI" id="CHEBI:15378"/>
        <dbReference type="ChEBI" id="CHEBI:28938"/>
        <dbReference type="ChEBI" id="CHEBI:30616"/>
        <dbReference type="ChEBI" id="CHEBI:43474"/>
        <dbReference type="ChEBI" id="CHEBI:45075"/>
        <dbReference type="ChEBI" id="CHEBI:61036"/>
        <dbReference type="ChEBI" id="CHEBI:456216"/>
        <dbReference type="EC" id="6.3.4.20"/>
    </reaction>
</comment>
<comment type="cofactor">
    <cofactor evidence="1">
        <name>Zn(2+)</name>
        <dbReference type="ChEBI" id="CHEBI:29105"/>
    </cofactor>
    <text evidence="1">Binds 1 zinc ion per subunit.</text>
</comment>
<comment type="pathway">
    <text evidence="1">Purine metabolism; 7-cyano-7-deazaguanine biosynthesis.</text>
</comment>
<comment type="similarity">
    <text evidence="1">Belongs to the QueC family.</text>
</comment>
<sequence length="229" mass="25106">MKRAVVVFSGGQDSTTCLIQALHHYDDVHCITFDYGQRHRAEIDVARRLAGQLGASAHKVLDVGLLNELAISSLTRDNIPVPTQSEDGIPNTFVPGRNVLFLTLAAIYAYQVEAEAVITGVCETDFSGYPDCRDQFVQALNHAVCLGMARDIRFETPLMWLNKAETWALADYYGQLARVRHDTLTCYNGVQGDGCGHCAACHLRAHGLQQYLANPAAVMAALKRKSGLQ</sequence>
<feature type="chain" id="PRO_1000215790" description="7-cyano-7-deazaguanine synthase">
    <location>
        <begin position="1"/>
        <end position="229"/>
    </location>
</feature>
<feature type="binding site" evidence="1">
    <location>
        <begin position="8"/>
        <end position="18"/>
    </location>
    <ligand>
        <name>ATP</name>
        <dbReference type="ChEBI" id="CHEBI:30616"/>
    </ligand>
</feature>
<feature type="binding site" evidence="1">
    <location>
        <position position="186"/>
    </location>
    <ligand>
        <name>Zn(2+)</name>
        <dbReference type="ChEBI" id="CHEBI:29105"/>
    </ligand>
</feature>
<feature type="binding site" evidence="1">
    <location>
        <position position="195"/>
    </location>
    <ligand>
        <name>Zn(2+)</name>
        <dbReference type="ChEBI" id="CHEBI:29105"/>
    </ligand>
</feature>
<feature type="binding site" evidence="1">
    <location>
        <position position="198"/>
    </location>
    <ligand>
        <name>Zn(2+)</name>
        <dbReference type="ChEBI" id="CHEBI:29105"/>
    </ligand>
</feature>
<feature type="binding site" evidence="1">
    <location>
        <position position="201"/>
    </location>
    <ligand>
        <name>Zn(2+)</name>
        <dbReference type="ChEBI" id="CHEBI:29105"/>
    </ligand>
</feature>
<protein>
    <recommendedName>
        <fullName evidence="1">7-cyano-7-deazaguanine synthase</fullName>
        <ecNumber evidence="1">6.3.4.20</ecNumber>
    </recommendedName>
    <alternativeName>
        <fullName evidence="1">7-cyano-7-carbaguanine synthase</fullName>
    </alternativeName>
    <alternativeName>
        <fullName evidence="1">PreQ(0) synthase</fullName>
    </alternativeName>
    <alternativeName>
        <fullName evidence="1">Queuosine biosynthesis protein QueC</fullName>
    </alternativeName>
</protein>
<organism>
    <name type="scientific">Edwardsiella ictaluri (strain 93-146)</name>
    <dbReference type="NCBI Taxonomy" id="634503"/>
    <lineage>
        <taxon>Bacteria</taxon>
        <taxon>Pseudomonadati</taxon>
        <taxon>Pseudomonadota</taxon>
        <taxon>Gammaproteobacteria</taxon>
        <taxon>Enterobacterales</taxon>
        <taxon>Hafniaceae</taxon>
        <taxon>Edwardsiella</taxon>
    </lineage>
</organism>
<gene>
    <name evidence="1" type="primary">queC</name>
    <name type="ordered locus">NT01EI_1085</name>
</gene>